<name>RS16_KLULA</name>
<protein>
    <recommendedName>
        <fullName evidence="2">Small ribosomal subunit protein uS9</fullName>
    </recommendedName>
    <alternativeName>
        <fullName>40S ribosomal protein S16</fullName>
    </alternativeName>
</protein>
<organism>
    <name type="scientific">Kluyveromyces lactis (strain ATCC 8585 / CBS 2359 / DSM 70799 / NBRC 1267 / NRRL Y-1140 / WM37)</name>
    <name type="common">Yeast</name>
    <name type="synonym">Candida sphaerica</name>
    <dbReference type="NCBI Taxonomy" id="284590"/>
    <lineage>
        <taxon>Eukaryota</taxon>
        <taxon>Fungi</taxon>
        <taxon>Dikarya</taxon>
        <taxon>Ascomycota</taxon>
        <taxon>Saccharomycotina</taxon>
        <taxon>Saccharomycetes</taxon>
        <taxon>Saccharomycetales</taxon>
        <taxon>Saccharomycetaceae</taxon>
        <taxon>Kluyveromyces</taxon>
    </lineage>
</organism>
<comment type="similarity">
    <text evidence="2">Belongs to the universal ribosomal protein uS9 family.</text>
</comment>
<gene>
    <name type="primary">RPS16</name>
    <name type="ordered locus">KLLA0E22077g</name>
</gene>
<dbReference type="EMBL" id="AY145037">
    <property type="protein sequence ID" value="AAO32599.1"/>
    <property type="molecule type" value="Genomic_DNA"/>
</dbReference>
<dbReference type="EMBL" id="CR382125">
    <property type="protein sequence ID" value="CAH00033.1"/>
    <property type="molecule type" value="Genomic_DNA"/>
</dbReference>
<dbReference type="RefSeq" id="XP_454946.1">
    <property type="nucleotide sequence ID" value="XM_454946.1"/>
</dbReference>
<dbReference type="PDB" id="3J80">
    <property type="method" value="EM"/>
    <property type="resolution" value="3.75 A"/>
    <property type="chains" value="Q=1-143"/>
</dbReference>
<dbReference type="PDB" id="3J81">
    <property type="method" value="EM"/>
    <property type="resolution" value="4.00 A"/>
    <property type="chains" value="Q=1-143"/>
</dbReference>
<dbReference type="PDB" id="3JAM">
    <property type="method" value="EM"/>
    <property type="resolution" value="3.46 A"/>
    <property type="chains" value="Q=1-143"/>
</dbReference>
<dbReference type="PDB" id="3JAP">
    <property type="method" value="EM"/>
    <property type="resolution" value="4.90 A"/>
    <property type="chains" value="Q=1-143"/>
</dbReference>
<dbReference type="PDB" id="5IT7">
    <property type="method" value="EM"/>
    <property type="resolution" value="3.60 A"/>
    <property type="chains" value="Q=3-143"/>
</dbReference>
<dbReference type="PDB" id="5IT9">
    <property type="method" value="EM"/>
    <property type="resolution" value="3.80 A"/>
    <property type="chains" value="Q=3-143"/>
</dbReference>
<dbReference type="PDB" id="6FYX">
    <property type="method" value="EM"/>
    <property type="resolution" value="3.05 A"/>
    <property type="chains" value="Q=1-143"/>
</dbReference>
<dbReference type="PDB" id="6FYY">
    <property type="method" value="EM"/>
    <property type="resolution" value="3.05 A"/>
    <property type="chains" value="Q=1-143"/>
</dbReference>
<dbReference type="PDB" id="6GSM">
    <property type="method" value="EM"/>
    <property type="resolution" value="5.15 A"/>
    <property type="chains" value="Q=3-143"/>
</dbReference>
<dbReference type="PDB" id="6GSN">
    <property type="method" value="EM"/>
    <property type="resolution" value="5.75 A"/>
    <property type="chains" value="Q=3-143"/>
</dbReference>
<dbReference type="PDB" id="6UZ7">
    <property type="method" value="EM"/>
    <property type="resolution" value="3.60 A"/>
    <property type="chains" value="Q=1-143"/>
</dbReference>
<dbReference type="PDB" id="8I7J">
    <property type="method" value="EM"/>
    <property type="resolution" value="4.60 A"/>
    <property type="chains" value="Q=1-143"/>
</dbReference>
<dbReference type="PDB" id="8RW1">
    <property type="method" value="EM"/>
    <property type="resolution" value="3.35 A"/>
    <property type="chains" value="Q=1-143"/>
</dbReference>
<dbReference type="PDB" id="8S8D">
    <property type="method" value="EM"/>
    <property type="resolution" value="3.45 A"/>
    <property type="chains" value="Q=1-143"/>
</dbReference>
<dbReference type="PDB" id="8S8E">
    <property type="method" value="EM"/>
    <property type="resolution" value="3.85 A"/>
    <property type="chains" value="Q=1-143"/>
</dbReference>
<dbReference type="PDB" id="8S8F">
    <property type="method" value="EM"/>
    <property type="resolution" value="3.95 A"/>
    <property type="chains" value="Q=1-143"/>
</dbReference>
<dbReference type="PDB" id="8S8G">
    <property type="method" value="EM"/>
    <property type="resolution" value="4.00 A"/>
    <property type="chains" value="Q=1-143"/>
</dbReference>
<dbReference type="PDB" id="8S8H">
    <property type="method" value="EM"/>
    <property type="resolution" value="4.00 A"/>
    <property type="chains" value="Q=1-143"/>
</dbReference>
<dbReference type="PDB" id="8S8I">
    <property type="method" value="EM"/>
    <property type="resolution" value="4.30 A"/>
    <property type="chains" value="Q=1-143"/>
</dbReference>
<dbReference type="PDB" id="8S8J">
    <property type="method" value="EM"/>
    <property type="resolution" value="4.70 A"/>
    <property type="chains" value="Q=1-143"/>
</dbReference>
<dbReference type="PDB" id="8S8K">
    <property type="method" value="EM"/>
    <property type="resolution" value="4.00 A"/>
    <property type="chains" value="Q=1-143"/>
</dbReference>
<dbReference type="PDBsum" id="3J80"/>
<dbReference type="PDBsum" id="3J81"/>
<dbReference type="PDBsum" id="3JAM"/>
<dbReference type="PDBsum" id="3JAP"/>
<dbReference type="PDBsum" id="5IT7"/>
<dbReference type="PDBsum" id="5IT9"/>
<dbReference type="PDBsum" id="6FYX"/>
<dbReference type="PDBsum" id="6FYY"/>
<dbReference type="PDBsum" id="6GSM"/>
<dbReference type="PDBsum" id="6GSN"/>
<dbReference type="PDBsum" id="6UZ7"/>
<dbReference type="PDBsum" id="8I7J"/>
<dbReference type="PDBsum" id="8RW1"/>
<dbReference type="PDBsum" id="8S8D"/>
<dbReference type="PDBsum" id="8S8E"/>
<dbReference type="PDBsum" id="8S8F"/>
<dbReference type="PDBsum" id="8S8G"/>
<dbReference type="PDBsum" id="8S8H"/>
<dbReference type="PDBsum" id="8S8I"/>
<dbReference type="PDBsum" id="8S8J"/>
<dbReference type="PDBsum" id="8S8K"/>
<dbReference type="EMDB" id="EMD-0057"/>
<dbReference type="EMDB" id="EMD-0058"/>
<dbReference type="EMDB" id="EMD-19541"/>
<dbReference type="EMDB" id="EMD-19801"/>
<dbReference type="EMDB" id="EMD-19802"/>
<dbReference type="EMDB" id="EMD-19803"/>
<dbReference type="EMDB" id="EMD-19804"/>
<dbReference type="EMDB" id="EMD-19805"/>
<dbReference type="EMDB" id="EMD-19806"/>
<dbReference type="EMDB" id="EMD-19807"/>
<dbReference type="EMDB" id="EMD-19808"/>
<dbReference type="EMDB" id="EMD-20952"/>
<dbReference type="EMDB" id="EMD-35216"/>
<dbReference type="EMDB" id="EMD-4327"/>
<dbReference type="EMDB" id="EMD-4328"/>
<dbReference type="EMDB" id="EMD-8124"/>
<dbReference type="SMR" id="Q875N2"/>
<dbReference type="FunCoup" id="Q875N2">
    <property type="interactions" value="861"/>
</dbReference>
<dbReference type="STRING" id="284590.Q875N2"/>
<dbReference type="PaxDb" id="284590-Q875N2"/>
<dbReference type="KEGG" id="kla:KLLA0_E21979g"/>
<dbReference type="eggNOG" id="KOG1753">
    <property type="taxonomic scope" value="Eukaryota"/>
</dbReference>
<dbReference type="HOGENOM" id="CLU_046483_4_0_1"/>
<dbReference type="InParanoid" id="Q875N2"/>
<dbReference type="OMA" id="WPIEMAR"/>
<dbReference type="EvolutionaryTrace" id="Q875N2"/>
<dbReference type="Proteomes" id="UP000000598">
    <property type="component" value="Chromosome E"/>
</dbReference>
<dbReference type="GO" id="GO:0022627">
    <property type="term" value="C:cytosolic small ribosomal subunit"/>
    <property type="evidence" value="ECO:0007669"/>
    <property type="project" value="TreeGrafter"/>
</dbReference>
<dbReference type="GO" id="GO:0003723">
    <property type="term" value="F:RNA binding"/>
    <property type="evidence" value="ECO:0007669"/>
    <property type="project" value="TreeGrafter"/>
</dbReference>
<dbReference type="GO" id="GO:0003735">
    <property type="term" value="F:structural constituent of ribosome"/>
    <property type="evidence" value="ECO:0007669"/>
    <property type="project" value="InterPro"/>
</dbReference>
<dbReference type="GO" id="GO:0000462">
    <property type="term" value="P:maturation of SSU-rRNA from tricistronic rRNA transcript (SSU-rRNA, 5.8S rRNA, LSU-rRNA)"/>
    <property type="evidence" value="ECO:0007669"/>
    <property type="project" value="TreeGrafter"/>
</dbReference>
<dbReference type="GO" id="GO:0006412">
    <property type="term" value="P:translation"/>
    <property type="evidence" value="ECO:0007669"/>
    <property type="project" value="InterPro"/>
</dbReference>
<dbReference type="FunFam" id="3.30.230.10:FF:000007">
    <property type="entry name" value="40S ribosomal protein S16"/>
    <property type="match status" value="1"/>
</dbReference>
<dbReference type="Gene3D" id="3.30.230.10">
    <property type="match status" value="1"/>
</dbReference>
<dbReference type="InterPro" id="IPR020568">
    <property type="entry name" value="Ribosomal_Su5_D2-typ_SF"/>
</dbReference>
<dbReference type="InterPro" id="IPR000754">
    <property type="entry name" value="Ribosomal_uS9"/>
</dbReference>
<dbReference type="InterPro" id="IPR020574">
    <property type="entry name" value="Ribosomal_uS9_CS"/>
</dbReference>
<dbReference type="InterPro" id="IPR014721">
    <property type="entry name" value="Ribsml_uS5_D2-typ_fold_subgr"/>
</dbReference>
<dbReference type="NCBIfam" id="NF001749">
    <property type="entry name" value="PRK00474.1"/>
    <property type="match status" value="1"/>
</dbReference>
<dbReference type="PANTHER" id="PTHR21569:SF16">
    <property type="entry name" value="RIBOSOMAL PROTEIN S16"/>
    <property type="match status" value="1"/>
</dbReference>
<dbReference type="PANTHER" id="PTHR21569">
    <property type="entry name" value="RIBOSOMAL PROTEIN S9"/>
    <property type="match status" value="1"/>
</dbReference>
<dbReference type="Pfam" id="PF00380">
    <property type="entry name" value="Ribosomal_S9"/>
    <property type="match status" value="1"/>
</dbReference>
<dbReference type="SUPFAM" id="SSF54211">
    <property type="entry name" value="Ribosomal protein S5 domain 2-like"/>
    <property type="match status" value="1"/>
</dbReference>
<dbReference type="PROSITE" id="PS00360">
    <property type="entry name" value="RIBOSOMAL_S9"/>
    <property type="match status" value="1"/>
</dbReference>
<evidence type="ECO:0000256" key="1">
    <source>
        <dbReference type="SAM" id="MobiDB-lite"/>
    </source>
</evidence>
<evidence type="ECO:0000305" key="2"/>
<evidence type="ECO:0007829" key="3">
    <source>
        <dbReference type="PDB" id="8RW1"/>
    </source>
</evidence>
<feature type="chain" id="PRO_0000111499" description="Small ribosomal subunit protein uS9">
    <location>
        <begin position="1"/>
        <end position="143"/>
    </location>
</feature>
<feature type="region of interest" description="Disordered" evidence="1">
    <location>
        <begin position="123"/>
        <end position="143"/>
    </location>
</feature>
<feature type="compositionally biased region" description="Basic residues" evidence="1">
    <location>
        <begin position="134"/>
        <end position="143"/>
    </location>
</feature>
<feature type="strand" evidence="3">
    <location>
        <begin position="6"/>
        <end position="12"/>
    </location>
</feature>
<feature type="strand" evidence="3">
    <location>
        <begin position="17"/>
        <end position="24"/>
    </location>
</feature>
<feature type="strand" evidence="3">
    <location>
        <begin position="26"/>
        <end position="31"/>
    </location>
</feature>
<feature type="helix" evidence="3">
    <location>
        <begin position="36"/>
        <end position="38"/>
    </location>
</feature>
<feature type="strand" evidence="3">
    <location>
        <begin position="42"/>
        <end position="44"/>
    </location>
</feature>
<feature type="helix" evidence="3">
    <location>
        <begin position="45"/>
        <end position="55"/>
    </location>
</feature>
<feature type="helix" evidence="3">
    <location>
        <begin position="57"/>
        <end position="60"/>
    </location>
</feature>
<feature type="strand" evidence="3">
    <location>
        <begin position="64"/>
        <end position="72"/>
    </location>
</feature>
<feature type="helix" evidence="3">
    <location>
        <begin position="74"/>
        <end position="96"/>
    </location>
</feature>
<feature type="helix" evidence="3">
    <location>
        <begin position="99"/>
        <end position="110"/>
    </location>
</feature>
<feature type="helix" evidence="3">
    <location>
        <begin position="114"/>
        <end position="116"/>
    </location>
</feature>
<feature type="strand" evidence="3">
    <location>
        <begin position="132"/>
        <end position="135"/>
    </location>
</feature>
<proteinExistence type="evidence at protein level"/>
<keyword id="KW-0002">3D-structure</keyword>
<keyword id="KW-1185">Reference proteome</keyword>
<keyword id="KW-0687">Ribonucleoprotein</keyword>
<keyword id="KW-0689">Ribosomal protein</keyword>
<sequence>MSTVPSVQTFGKKKSATAVAHVKAGKGLIKVNGSPITLVQPEILRFKVYEPLLLVGLDKFANIDIRVKVTGGGHVSQVYAIRQAIAKGLVAYHQKFVDEQSKNELKKAFTSYDRTLLIADSRRPEPKKFGGRGARSRFQKSYR</sequence>
<accession>Q875N2</accession>
<accession>Q6CM93</accession>
<reference key="1">
    <citation type="journal article" date="2003" name="Nature">
        <title>Yeast genome duplication was followed by asynchronous differentiation of duplicated genes.</title>
        <authorList>
            <person name="Langkjaer R.B."/>
            <person name="Cliften P.F."/>
            <person name="Johnston M."/>
            <person name="Piskur J."/>
        </authorList>
    </citation>
    <scope>NUCLEOTIDE SEQUENCE [GENOMIC DNA]</scope>
    <source>
        <strain>ATCC 76492 / CBS 2359/152 / CLIB 210</strain>
    </source>
</reference>
<reference key="2">
    <citation type="journal article" date="2004" name="Nature">
        <title>Genome evolution in yeasts.</title>
        <authorList>
            <person name="Dujon B."/>
            <person name="Sherman D."/>
            <person name="Fischer G."/>
            <person name="Durrens P."/>
            <person name="Casaregola S."/>
            <person name="Lafontaine I."/>
            <person name="de Montigny J."/>
            <person name="Marck C."/>
            <person name="Neuveglise C."/>
            <person name="Talla E."/>
            <person name="Goffard N."/>
            <person name="Frangeul L."/>
            <person name="Aigle M."/>
            <person name="Anthouard V."/>
            <person name="Babour A."/>
            <person name="Barbe V."/>
            <person name="Barnay S."/>
            <person name="Blanchin S."/>
            <person name="Beckerich J.-M."/>
            <person name="Beyne E."/>
            <person name="Bleykasten C."/>
            <person name="Boisrame A."/>
            <person name="Boyer J."/>
            <person name="Cattolico L."/>
            <person name="Confanioleri F."/>
            <person name="de Daruvar A."/>
            <person name="Despons L."/>
            <person name="Fabre E."/>
            <person name="Fairhead C."/>
            <person name="Ferry-Dumazet H."/>
            <person name="Groppi A."/>
            <person name="Hantraye F."/>
            <person name="Hennequin C."/>
            <person name="Jauniaux N."/>
            <person name="Joyet P."/>
            <person name="Kachouri R."/>
            <person name="Kerrest A."/>
            <person name="Koszul R."/>
            <person name="Lemaire M."/>
            <person name="Lesur I."/>
            <person name="Ma L."/>
            <person name="Muller H."/>
            <person name="Nicaud J.-M."/>
            <person name="Nikolski M."/>
            <person name="Oztas S."/>
            <person name="Ozier-Kalogeropoulos O."/>
            <person name="Pellenz S."/>
            <person name="Potier S."/>
            <person name="Richard G.-F."/>
            <person name="Straub M.-L."/>
            <person name="Suleau A."/>
            <person name="Swennen D."/>
            <person name="Tekaia F."/>
            <person name="Wesolowski-Louvel M."/>
            <person name="Westhof E."/>
            <person name="Wirth B."/>
            <person name="Zeniou-Meyer M."/>
            <person name="Zivanovic Y."/>
            <person name="Bolotin-Fukuhara M."/>
            <person name="Thierry A."/>
            <person name="Bouchier C."/>
            <person name="Caudron B."/>
            <person name="Scarpelli C."/>
            <person name="Gaillardin C."/>
            <person name="Weissenbach J."/>
            <person name="Wincker P."/>
            <person name="Souciet J.-L."/>
        </authorList>
    </citation>
    <scope>NUCLEOTIDE SEQUENCE [LARGE SCALE GENOMIC DNA]</scope>
    <source>
        <strain>ATCC 8585 / CBS 2359 / DSM 70799 / NBRC 1267 / NRRL Y-1140 / WM37</strain>
    </source>
</reference>